<organism>
    <name type="scientific">Pediococcus pentosaceus (strain ATCC 25745 / CCUG 21536 / LMG 10740 / 183-1w)</name>
    <dbReference type="NCBI Taxonomy" id="278197"/>
    <lineage>
        <taxon>Bacteria</taxon>
        <taxon>Bacillati</taxon>
        <taxon>Bacillota</taxon>
        <taxon>Bacilli</taxon>
        <taxon>Lactobacillales</taxon>
        <taxon>Lactobacillaceae</taxon>
        <taxon>Pediococcus</taxon>
    </lineage>
</organism>
<proteinExistence type="inferred from homology"/>
<dbReference type="EC" id="3.5.3.6" evidence="1"/>
<dbReference type="EMBL" id="CP000422">
    <property type="protein sequence ID" value="ABJ68650.1"/>
    <property type="molecule type" value="Genomic_DNA"/>
</dbReference>
<dbReference type="RefSeq" id="WP_011673771.1">
    <property type="nucleotide sequence ID" value="NC_008525.1"/>
</dbReference>
<dbReference type="SMR" id="Q03DS2"/>
<dbReference type="STRING" id="278197.PEPE_1629"/>
<dbReference type="GeneID" id="33062580"/>
<dbReference type="KEGG" id="ppe:PEPE_1629"/>
<dbReference type="eggNOG" id="COG2235">
    <property type="taxonomic scope" value="Bacteria"/>
</dbReference>
<dbReference type="HOGENOM" id="CLU_052662_0_1_9"/>
<dbReference type="OrthoDB" id="9807502at2"/>
<dbReference type="UniPathway" id="UPA00254">
    <property type="reaction ID" value="UER00364"/>
</dbReference>
<dbReference type="Proteomes" id="UP000000773">
    <property type="component" value="Chromosome"/>
</dbReference>
<dbReference type="GO" id="GO:0005737">
    <property type="term" value="C:cytoplasm"/>
    <property type="evidence" value="ECO:0007669"/>
    <property type="project" value="UniProtKB-SubCell"/>
</dbReference>
<dbReference type="GO" id="GO:0016990">
    <property type="term" value="F:arginine deiminase activity"/>
    <property type="evidence" value="ECO:0007669"/>
    <property type="project" value="UniProtKB-UniRule"/>
</dbReference>
<dbReference type="GO" id="GO:0019547">
    <property type="term" value="P:arginine catabolic process to ornithine"/>
    <property type="evidence" value="ECO:0007669"/>
    <property type="project" value="UniProtKB-UniRule"/>
</dbReference>
<dbReference type="GO" id="GO:0019546">
    <property type="term" value="P:arginine deiminase pathway"/>
    <property type="evidence" value="ECO:0007669"/>
    <property type="project" value="TreeGrafter"/>
</dbReference>
<dbReference type="Gene3D" id="1.10.3930.10">
    <property type="entry name" value="Arginine deiminase"/>
    <property type="match status" value="1"/>
</dbReference>
<dbReference type="Gene3D" id="3.75.10.10">
    <property type="entry name" value="L-arginine/glycine Amidinotransferase, Chain A"/>
    <property type="match status" value="1"/>
</dbReference>
<dbReference type="HAMAP" id="MF_00242">
    <property type="entry name" value="Arg_deiminase"/>
    <property type="match status" value="1"/>
</dbReference>
<dbReference type="InterPro" id="IPR003876">
    <property type="entry name" value="Arg_deiminase"/>
</dbReference>
<dbReference type="NCBIfam" id="TIGR01078">
    <property type="entry name" value="arcA"/>
    <property type="match status" value="1"/>
</dbReference>
<dbReference type="NCBIfam" id="NF002381">
    <property type="entry name" value="PRK01388.1"/>
    <property type="match status" value="1"/>
</dbReference>
<dbReference type="PANTHER" id="PTHR47271">
    <property type="entry name" value="ARGININE DEIMINASE"/>
    <property type="match status" value="1"/>
</dbReference>
<dbReference type="PANTHER" id="PTHR47271:SF2">
    <property type="entry name" value="ARGININE DEIMINASE"/>
    <property type="match status" value="1"/>
</dbReference>
<dbReference type="Pfam" id="PF02274">
    <property type="entry name" value="ADI"/>
    <property type="match status" value="1"/>
</dbReference>
<dbReference type="PIRSF" id="PIRSF006356">
    <property type="entry name" value="Arg_deiminase"/>
    <property type="match status" value="1"/>
</dbReference>
<dbReference type="PRINTS" id="PR01466">
    <property type="entry name" value="ARGDEIMINASE"/>
</dbReference>
<dbReference type="SUPFAM" id="SSF55909">
    <property type="entry name" value="Pentein"/>
    <property type="match status" value="1"/>
</dbReference>
<name>ARCA_PEDPA</name>
<feature type="chain" id="PRO_0000336671" description="Arginine deiminase">
    <location>
        <begin position="1"/>
        <end position="407"/>
    </location>
</feature>
<feature type="active site" description="Amidino-cysteine intermediate" evidence="1">
    <location>
        <position position="397"/>
    </location>
</feature>
<accession>Q03DS2</accession>
<evidence type="ECO:0000255" key="1">
    <source>
        <dbReference type="HAMAP-Rule" id="MF_00242"/>
    </source>
</evidence>
<protein>
    <recommendedName>
        <fullName evidence="1">Arginine deiminase</fullName>
        <shortName evidence="1">ADI</shortName>
        <ecNumber evidence="1">3.5.3.6</ecNumber>
    </recommendedName>
    <alternativeName>
        <fullName evidence="1">Arginine dihydrolase</fullName>
        <shortName evidence="1">AD</shortName>
    </alternativeName>
</protein>
<keyword id="KW-0056">Arginine metabolism</keyword>
<keyword id="KW-0963">Cytoplasm</keyword>
<keyword id="KW-0378">Hydrolase</keyword>
<gene>
    <name evidence="1" type="primary">arcA</name>
    <name type="ordered locus">PEPE_1629</name>
</gene>
<sequence length="407" mass="45910">MANAIHVTSEIGKLKTVMLHRPGKEIENITPDSMERLLFDDIPYLPIAQKEHDFFAKTLTDQGIEVIYFEKLAADALSDDGVRKEFLNRMIAESGYAVGVIHDALMEYLYAMDPQMMINQIIEGVRASDVNIVTPDLQSVSENTDWPFLMDPMPNAYFTRDPQASIGDGLSINKMTFEARMRESLITEYIMNYNPRFAGKVKVWRDRNHRTHIEGGDELVLNDHVLAIGISQRTTANAIEDIARNLFKDSNYDTIIAISIPHNHAMMHLDTVFTMINYEQFTVHPAILTGDGKVDNWVLHPGKDGEITMEHHTDIKEVLKKALNKSEIDLIPTGNGDPIVAPREQWNDGSNTLSIAPGVVVTYDRNYVSNDLLRQHGILVHEVRSSELSRGRGGPRCMSCPIVREDI</sequence>
<reference key="1">
    <citation type="journal article" date="2006" name="Proc. Natl. Acad. Sci. U.S.A.">
        <title>Comparative genomics of the lactic acid bacteria.</title>
        <authorList>
            <person name="Makarova K.S."/>
            <person name="Slesarev A."/>
            <person name="Wolf Y.I."/>
            <person name="Sorokin A."/>
            <person name="Mirkin B."/>
            <person name="Koonin E.V."/>
            <person name="Pavlov A."/>
            <person name="Pavlova N."/>
            <person name="Karamychev V."/>
            <person name="Polouchine N."/>
            <person name="Shakhova V."/>
            <person name="Grigoriev I."/>
            <person name="Lou Y."/>
            <person name="Rohksar D."/>
            <person name="Lucas S."/>
            <person name="Huang K."/>
            <person name="Goodstein D.M."/>
            <person name="Hawkins T."/>
            <person name="Plengvidhya V."/>
            <person name="Welker D."/>
            <person name="Hughes J."/>
            <person name="Goh Y."/>
            <person name="Benson A."/>
            <person name="Baldwin K."/>
            <person name="Lee J.-H."/>
            <person name="Diaz-Muniz I."/>
            <person name="Dosti B."/>
            <person name="Smeianov V."/>
            <person name="Wechter W."/>
            <person name="Barabote R."/>
            <person name="Lorca G."/>
            <person name="Altermann E."/>
            <person name="Barrangou R."/>
            <person name="Ganesan B."/>
            <person name="Xie Y."/>
            <person name="Rawsthorne H."/>
            <person name="Tamir D."/>
            <person name="Parker C."/>
            <person name="Breidt F."/>
            <person name="Broadbent J.R."/>
            <person name="Hutkins R."/>
            <person name="O'Sullivan D."/>
            <person name="Steele J."/>
            <person name="Unlu G."/>
            <person name="Saier M.H. Jr."/>
            <person name="Klaenhammer T."/>
            <person name="Richardson P."/>
            <person name="Kozyavkin S."/>
            <person name="Weimer B.C."/>
            <person name="Mills D.A."/>
        </authorList>
    </citation>
    <scope>NUCLEOTIDE SEQUENCE [LARGE SCALE GENOMIC DNA]</scope>
    <source>
        <strain>ATCC 25745 / CCUG 21536 / LMG 10740 / 183-1w</strain>
    </source>
</reference>
<comment type="catalytic activity">
    <reaction evidence="1">
        <text>L-arginine + H2O = L-citrulline + NH4(+)</text>
        <dbReference type="Rhea" id="RHEA:19597"/>
        <dbReference type="ChEBI" id="CHEBI:15377"/>
        <dbReference type="ChEBI" id="CHEBI:28938"/>
        <dbReference type="ChEBI" id="CHEBI:32682"/>
        <dbReference type="ChEBI" id="CHEBI:57743"/>
        <dbReference type="EC" id="3.5.3.6"/>
    </reaction>
</comment>
<comment type="pathway">
    <text evidence="1">Amino-acid degradation; L-arginine degradation via ADI pathway; carbamoyl phosphate from L-arginine: step 1/2.</text>
</comment>
<comment type="subcellular location">
    <subcellularLocation>
        <location evidence="1">Cytoplasm</location>
    </subcellularLocation>
</comment>
<comment type="similarity">
    <text evidence="1">Belongs to the arginine deiminase family.</text>
</comment>